<reference key="1">
    <citation type="submission" date="2007-10" db="EMBL/GenBank/DDBJ databases">
        <title>Complete sequence of Caldivirga maquilingensis IC-167.</title>
        <authorList>
            <consortium name="US DOE Joint Genome Institute"/>
            <person name="Copeland A."/>
            <person name="Lucas S."/>
            <person name="Lapidus A."/>
            <person name="Barry K."/>
            <person name="Glavina del Rio T."/>
            <person name="Dalin E."/>
            <person name="Tice H."/>
            <person name="Pitluck S."/>
            <person name="Saunders E."/>
            <person name="Brettin T."/>
            <person name="Bruce D."/>
            <person name="Detter J.C."/>
            <person name="Han C."/>
            <person name="Schmutz J."/>
            <person name="Larimer F."/>
            <person name="Land M."/>
            <person name="Hauser L."/>
            <person name="Kyrpides N."/>
            <person name="Ivanova N."/>
            <person name="Biddle J.F."/>
            <person name="Zhang Z."/>
            <person name="Fitz-Gibbon S.T."/>
            <person name="Lowe T.M."/>
            <person name="Saltikov C."/>
            <person name="House C.H."/>
            <person name="Richardson P."/>
        </authorList>
    </citation>
    <scope>NUCLEOTIDE SEQUENCE [LARGE SCALE GENOMIC DNA]</scope>
    <source>
        <strain>ATCC 700844 / DSM 13496 / JCM 10307 / IC-167</strain>
    </source>
</reference>
<feature type="chain" id="PRO_1000075570" description="Thiamine-phosphate synthase">
    <location>
        <begin position="1"/>
        <end position="205"/>
    </location>
</feature>
<feature type="binding site" evidence="1">
    <location>
        <begin position="36"/>
        <end position="40"/>
    </location>
    <ligand>
        <name>4-amino-2-methyl-5-(diphosphooxymethyl)pyrimidine</name>
        <dbReference type="ChEBI" id="CHEBI:57841"/>
    </ligand>
</feature>
<feature type="binding site" evidence="1">
    <location>
        <position position="68"/>
    </location>
    <ligand>
        <name>4-amino-2-methyl-5-(diphosphooxymethyl)pyrimidine</name>
        <dbReference type="ChEBI" id="CHEBI:57841"/>
    </ligand>
</feature>
<feature type="binding site" evidence="1">
    <location>
        <position position="69"/>
    </location>
    <ligand>
        <name>Mg(2+)</name>
        <dbReference type="ChEBI" id="CHEBI:18420"/>
    </ligand>
</feature>
<feature type="binding site" evidence="1">
    <location>
        <position position="88"/>
    </location>
    <ligand>
        <name>Mg(2+)</name>
        <dbReference type="ChEBI" id="CHEBI:18420"/>
    </ligand>
</feature>
<feature type="binding site" evidence="1">
    <location>
        <position position="106"/>
    </location>
    <ligand>
        <name>4-amino-2-methyl-5-(diphosphooxymethyl)pyrimidine</name>
        <dbReference type="ChEBI" id="CHEBI:57841"/>
    </ligand>
</feature>
<feature type="binding site" evidence="1">
    <location>
        <begin position="132"/>
        <end position="134"/>
    </location>
    <ligand>
        <name>2-[(2R,5Z)-2-carboxy-4-methylthiazol-5(2H)-ylidene]ethyl phosphate</name>
        <dbReference type="ChEBI" id="CHEBI:62899"/>
    </ligand>
</feature>
<feature type="binding site" evidence="1">
    <location>
        <position position="135"/>
    </location>
    <ligand>
        <name>4-amino-2-methyl-5-(diphosphooxymethyl)pyrimidine</name>
        <dbReference type="ChEBI" id="CHEBI:57841"/>
    </ligand>
</feature>
<feature type="binding site" evidence="1">
    <location>
        <position position="162"/>
    </location>
    <ligand>
        <name>2-[(2R,5Z)-2-carboxy-4-methylthiazol-5(2H)-ylidene]ethyl phosphate</name>
        <dbReference type="ChEBI" id="CHEBI:62899"/>
    </ligand>
</feature>
<feature type="binding site" evidence="1">
    <location>
        <begin position="182"/>
        <end position="183"/>
    </location>
    <ligand>
        <name>2-[(2R,5Z)-2-carboxy-4-methylthiazol-5(2H)-ylidene]ethyl phosphate</name>
        <dbReference type="ChEBI" id="CHEBI:62899"/>
    </ligand>
</feature>
<evidence type="ECO:0000255" key="1">
    <source>
        <dbReference type="HAMAP-Rule" id="MF_00097"/>
    </source>
</evidence>
<dbReference type="EC" id="2.5.1.3" evidence="1"/>
<dbReference type="EMBL" id="CP000852">
    <property type="protein sequence ID" value="ABW00915.1"/>
    <property type="molecule type" value="Genomic_DNA"/>
</dbReference>
<dbReference type="RefSeq" id="WP_012185135.1">
    <property type="nucleotide sequence ID" value="NC_009954.1"/>
</dbReference>
<dbReference type="SMR" id="A8M9N4"/>
<dbReference type="STRING" id="397948.Cmaq_0061"/>
<dbReference type="GeneID" id="5710154"/>
<dbReference type="KEGG" id="cma:Cmaq_0061"/>
<dbReference type="eggNOG" id="arCOG01089">
    <property type="taxonomic scope" value="Archaea"/>
</dbReference>
<dbReference type="HOGENOM" id="CLU_018272_3_2_2"/>
<dbReference type="OrthoDB" id="85572at2157"/>
<dbReference type="UniPathway" id="UPA00060">
    <property type="reaction ID" value="UER00141"/>
</dbReference>
<dbReference type="Proteomes" id="UP000001137">
    <property type="component" value="Chromosome"/>
</dbReference>
<dbReference type="GO" id="GO:0005737">
    <property type="term" value="C:cytoplasm"/>
    <property type="evidence" value="ECO:0007669"/>
    <property type="project" value="TreeGrafter"/>
</dbReference>
<dbReference type="GO" id="GO:0000287">
    <property type="term" value="F:magnesium ion binding"/>
    <property type="evidence" value="ECO:0007669"/>
    <property type="project" value="UniProtKB-UniRule"/>
</dbReference>
<dbReference type="GO" id="GO:0004789">
    <property type="term" value="F:thiamine-phosphate diphosphorylase activity"/>
    <property type="evidence" value="ECO:0007669"/>
    <property type="project" value="UniProtKB-UniRule"/>
</dbReference>
<dbReference type="GO" id="GO:0009228">
    <property type="term" value="P:thiamine biosynthetic process"/>
    <property type="evidence" value="ECO:0007669"/>
    <property type="project" value="UniProtKB-KW"/>
</dbReference>
<dbReference type="GO" id="GO:0009229">
    <property type="term" value="P:thiamine diphosphate biosynthetic process"/>
    <property type="evidence" value="ECO:0007669"/>
    <property type="project" value="UniProtKB-UniRule"/>
</dbReference>
<dbReference type="CDD" id="cd00564">
    <property type="entry name" value="TMP_TenI"/>
    <property type="match status" value="1"/>
</dbReference>
<dbReference type="FunFam" id="3.20.20.70:FF:000096">
    <property type="entry name" value="Thiamine-phosphate synthase"/>
    <property type="match status" value="1"/>
</dbReference>
<dbReference type="Gene3D" id="3.20.20.70">
    <property type="entry name" value="Aldolase class I"/>
    <property type="match status" value="1"/>
</dbReference>
<dbReference type="HAMAP" id="MF_00097">
    <property type="entry name" value="TMP_synthase"/>
    <property type="match status" value="1"/>
</dbReference>
<dbReference type="InterPro" id="IPR013785">
    <property type="entry name" value="Aldolase_TIM"/>
</dbReference>
<dbReference type="InterPro" id="IPR036206">
    <property type="entry name" value="ThiamineP_synth_sf"/>
</dbReference>
<dbReference type="InterPro" id="IPR022998">
    <property type="entry name" value="ThiamineP_synth_TenI"/>
</dbReference>
<dbReference type="InterPro" id="IPR034291">
    <property type="entry name" value="TMP_synthase"/>
</dbReference>
<dbReference type="NCBIfam" id="TIGR00693">
    <property type="entry name" value="thiE"/>
    <property type="match status" value="1"/>
</dbReference>
<dbReference type="PANTHER" id="PTHR20857">
    <property type="entry name" value="THIAMINE-PHOSPHATE PYROPHOSPHORYLASE"/>
    <property type="match status" value="1"/>
</dbReference>
<dbReference type="PANTHER" id="PTHR20857:SF15">
    <property type="entry name" value="THIAMINE-PHOSPHATE SYNTHASE"/>
    <property type="match status" value="1"/>
</dbReference>
<dbReference type="Pfam" id="PF02581">
    <property type="entry name" value="TMP-TENI"/>
    <property type="match status" value="1"/>
</dbReference>
<dbReference type="SUPFAM" id="SSF51391">
    <property type="entry name" value="Thiamin phosphate synthase"/>
    <property type="match status" value="1"/>
</dbReference>
<protein>
    <recommendedName>
        <fullName evidence="1">Thiamine-phosphate synthase</fullName>
        <shortName evidence="1">TP synthase</shortName>
        <shortName evidence="1">TPS</shortName>
        <ecNumber evidence="1">2.5.1.3</ecNumber>
    </recommendedName>
    <alternativeName>
        <fullName evidence="1">Thiamine-phosphate pyrophosphorylase</fullName>
        <shortName evidence="1">TMP pyrophosphorylase</shortName>
        <shortName evidence="1">TMP-PPase</shortName>
    </alternativeName>
</protein>
<sequence length="205" mass="22057">MRLPKGIYGITDDSYNVKNHVDAAKVFLEGGVRIIQYRRKEGSIRQMLNEAKEIRKLCNQYGAVMIVDDRVDIAVLSDADGVHVGLEDAPVDEVKRRFSGIIIGASASTVDEAKEGEKAGADYLGAGSIFPSPTKPDYRILGLEGLRRVVQSVSIPVYAIGGVTLESIPAIKATGAWGAAVISGILAAKDPLEMAKRFVKAWDEA</sequence>
<keyword id="KW-0460">Magnesium</keyword>
<keyword id="KW-0479">Metal-binding</keyword>
<keyword id="KW-1185">Reference proteome</keyword>
<keyword id="KW-0784">Thiamine biosynthesis</keyword>
<keyword id="KW-0808">Transferase</keyword>
<accession>A8M9N4</accession>
<name>THIE_CALMQ</name>
<organism>
    <name type="scientific">Caldivirga maquilingensis (strain ATCC 700844 / DSM 13496 / JCM 10307 / IC-167)</name>
    <dbReference type="NCBI Taxonomy" id="397948"/>
    <lineage>
        <taxon>Archaea</taxon>
        <taxon>Thermoproteota</taxon>
        <taxon>Thermoprotei</taxon>
        <taxon>Thermoproteales</taxon>
        <taxon>Thermoproteaceae</taxon>
        <taxon>Caldivirga</taxon>
    </lineage>
</organism>
<proteinExistence type="inferred from homology"/>
<comment type="function">
    <text evidence="1">Condenses 4-methyl-5-(beta-hydroxyethyl)thiazole monophosphate (THZ-P) and 2-methyl-4-amino-5-hydroxymethyl pyrimidine pyrophosphate (HMP-PP) to form thiamine monophosphate (TMP).</text>
</comment>
<comment type="catalytic activity">
    <reaction evidence="1">
        <text>2-[(2R,5Z)-2-carboxy-4-methylthiazol-5(2H)-ylidene]ethyl phosphate + 4-amino-2-methyl-5-(diphosphooxymethyl)pyrimidine + 2 H(+) = thiamine phosphate + CO2 + diphosphate</text>
        <dbReference type="Rhea" id="RHEA:47844"/>
        <dbReference type="ChEBI" id="CHEBI:15378"/>
        <dbReference type="ChEBI" id="CHEBI:16526"/>
        <dbReference type="ChEBI" id="CHEBI:33019"/>
        <dbReference type="ChEBI" id="CHEBI:37575"/>
        <dbReference type="ChEBI" id="CHEBI:57841"/>
        <dbReference type="ChEBI" id="CHEBI:62899"/>
        <dbReference type="EC" id="2.5.1.3"/>
    </reaction>
</comment>
<comment type="catalytic activity">
    <reaction evidence="1">
        <text>2-(2-carboxy-4-methylthiazol-5-yl)ethyl phosphate + 4-amino-2-methyl-5-(diphosphooxymethyl)pyrimidine + 2 H(+) = thiamine phosphate + CO2 + diphosphate</text>
        <dbReference type="Rhea" id="RHEA:47848"/>
        <dbReference type="ChEBI" id="CHEBI:15378"/>
        <dbReference type="ChEBI" id="CHEBI:16526"/>
        <dbReference type="ChEBI" id="CHEBI:33019"/>
        <dbReference type="ChEBI" id="CHEBI:37575"/>
        <dbReference type="ChEBI" id="CHEBI:57841"/>
        <dbReference type="ChEBI" id="CHEBI:62890"/>
        <dbReference type="EC" id="2.5.1.3"/>
    </reaction>
</comment>
<comment type="catalytic activity">
    <reaction evidence="1">
        <text>4-methyl-5-(2-phosphooxyethyl)-thiazole + 4-amino-2-methyl-5-(diphosphooxymethyl)pyrimidine + H(+) = thiamine phosphate + diphosphate</text>
        <dbReference type="Rhea" id="RHEA:22328"/>
        <dbReference type="ChEBI" id="CHEBI:15378"/>
        <dbReference type="ChEBI" id="CHEBI:33019"/>
        <dbReference type="ChEBI" id="CHEBI:37575"/>
        <dbReference type="ChEBI" id="CHEBI:57841"/>
        <dbReference type="ChEBI" id="CHEBI:58296"/>
        <dbReference type="EC" id="2.5.1.3"/>
    </reaction>
</comment>
<comment type="cofactor">
    <cofactor evidence="1">
        <name>Mg(2+)</name>
        <dbReference type="ChEBI" id="CHEBI:18420"/>
    </cofactor>
    <text evidence="1">Binds 1 Mg(2+) ion per subunit.</text>
</comment>
<comment type="pathway">
    <text evidence="1">Cofactor biosynthesis; thiamine diphosphate biosynthesis; thiamine phosphate from 4-amino-2-methyl-5-diphosphomethylpyrimidine and 4-methyl-5-(2-phosphoethyl)-thiazole: step 1/1.</text>
</comment>
<comment type="similarity">
    <text evidence="1">Belongs to the thiamine-phosphate synthase family.</text>
</comment>
<gene>
    <name evidence="1" type="primary">thiE</name>
    <name type="ordered locus">Cmaq_0061</name>
</gene>